<organism>
    <name type="scientific">Escherichia coli (strain SMS-3-5 / SECEC)</name>
    <dbReference type="NCBI Taxonomy" id="439855"/>
    <lineage>
        <taxon>Bacteria</taxon>
        <taxon>Pseudomonadati</taxon>
        <taxon>Pseudomonadota</taxon>
        <taxon>Gammaproteobacteria</taxon>
        <taxon>Enterobacterales</taxon>
        <taxon>Enterobacteriaceae</taxon>
        <taxon>Escherichia</taxon>
    </lineage>
</organism>
<reference key="1">
    <citation type="journal article" date="2008" name="J. Bacteriol.">
        <title>Insights into the environmental resistance gene pool from the genome sequence of the multidrug-resistant environmental isolate Escherichia coli SMS-3-5.</title>
        <authorList>
            <person name="Fricke W.F."/>
            <person name="Wright M.S."/>
            <person name="Lindell A.H."/>
            <person name="Harkins D.M."/>
            <person name="Baker-Austin C."/>
            <person name="Ravel J."/>
            <person name="Stepanauskas R."/>
        </authorList>
    </citation>
    <scope>NUCLEOTIDE SEQUENCE [LARGE SCALE GENOMIC DNA]</scope>
    <source>
        <strain>SMS-3-5 / SECEC</strain>
    </source>
</reference>
<sequence>MLVWLAEHLVKYYSGFNVFSYLTFRAIVSLLTALFISLWMGPRMIAHLQKLSFGQVVRNDGPESHFSKRGTPTMGGIMILTAIVISVLLWAYPSNPYVWCVLVVLVGYGIIGFVDDYRKVVRKDTKGLIARWKYFWMSVIALGVAFALYLAGKDTPATQLVVPFFKDVMPQLGLFYILLAYFVIVGTGNAVNLTDGLDGLAIMPTVFVAGGFALVAWATGNMNFASYLHIPYLRHAGELVIVCTAIVGAGLGFLWFNTYPAQVFMGDVGSLALGGALGIIAVLLRQEFLLVIMGGVFVVETLSVILQVGSFKLRGQRIFRMAPIHHHYELKGWPEPRVIVRFWIISLMLVLIGLATLKVR</sequence>
<proteinExistence type="inferred from homology"/>
<name>MRAY_ECOSM</name>
<gene>
    <name evidence="1" type="primary">mraY</name>
    <name type="ordered locus">EcSMS35_0092</name>
</gene>
<comment type="function">
    <text evidence="1">Catalyzes the initial step of the lipid cycle reactions in the biosynthesis of the cell wall peptidoglycan: transfers peptidoglycan precursor phospho-MurNAc-pentapeptide from UDP-MurNAc-pentapeptide onto the lipid carrier undecaprenyl phosphate, yielding undecaprenyl-pyrophosphoryl-MurNAc-pentapeptide, known as lipid I.</text>
</comment>
<comment type="catalytic activity">
    <reaction evidence="1">
        <text>UDP-N-acetyl-alpha-D-muramoyl-L-alanyl-gamma-D-glutamyl-meso-2,6-diaminopimeloyl-D-alanyl-D-alanine + di-trans,octa-cis-undecaprenyl phosphate = di-trans,octa-cis-undecaprenyl diphospho-N-acetyl-alpha-D-muramoyl-L-alanyl-D-glutamyl-meso-2,6-diaminopimeloyl-D-alanyl-D-alanine + UMP</text>
        <dbReference type="Rhea" id="RHEA:28386"/>
        <dbReference type="ChEBI" id="CHEBI:57865"/>
        <dbReference type="ChEBI" id="CHEBI:60392"/>
        <dbReference type="ChEBI" id="CHEBI:61386"/>
        <dbReference type="ChEBI" id="CHEBI:61387"/>
        <dbReference type="EC" id="2.7.8.13"/>
    </reaction>
</comment>
<comment type="cofactor">
    <cofactor evidence="1">
        <name>Mg(2+)</name>
        <dbReference type="ChEBI" id="CHEBI:18420"/>
    </cofactor>
</comment>
<comment type="pathway">
    <text evidence="1">Cell wall biogenesis; peptidoglycan biosynthesis.</text>
</comment>
<comment type="subcellular location">
    <subcellularLocation>
        <location evidence="1">Cell inner membrane</location>
        <topology evidence="1">Multi-pass membrane protein</topology>
    </subcellularLocation>
</comment>
<comment type="similarity">
    <text evidence="1">Belongs to the glycosyltransferase 4 family. MraY subfamily.</text>
</comment>
<feature type="chain" id="PRO_1000116516" description="Phospho-N-acetylmuramoyl-pentapeptide-transferase">
    <location>
        <begin position="1"/>
        <end position="360"/>
    </location>
</feature>
<feature type="topological domain" description="Periplasmic" evidence="1">
    <location>
        <begin position="1"/>
        <end position="25"/>
    </location>
</feature>
<feature type="transmembrane region" description="Helical" evidence="1">
    <location>
        <begin position="26"/>
        <end position="46"/>
    </location>
</feature>
<feature type="topological domain" description="Cytoplasmic" evidence="1">
    <location>
        <begin position="47"/>
        <end position="71"/>
    </location>
</feature>
<feature type="transmembrane region" description="Helical" evidence="1">
    <location>
        <begin position="72"/>
        <end position="92"/>
    </location>
</feature>
<feature type="topological domain" description="Periplasmic" evidence="1">
    <location>
        <position position="93"/>
    </location>
</feature>
<feature type="transmembrane region" description="Helical" evidence="1">
    <location>
        <begin position="94"/>
        <end position="114"/>
    </location>
</feature>
<feature type="topological domain" description="Cytoplasmic" evidence="1">
    <location>
        <begin position="115"/>
        <end position="131"/>
    </location>
</feature>
<feature type="transmembrane region" description="Helical" evidence="1">
    <location>
        <begin position="132"/>
        <end position="152"/>
    </location>
</feature>
<feature type="topological domain" description="Periplasmic" evidence="1">
    <location>
        <begin position="153"/>
        <end position="167"/>
    </location>
</feature>
<feature type="transmembrane region" description="Helical" evidence="1">
    <location>
        <begin position="168"/>
        <end position="188"/>
    </location>
</feature>
<feature type="topological domain" description="Cytoplasmic" evidence="1">
    <location>
        <begin position="189"/>
        <end position="198"/>
    </location>
</feature>
<feature type="transmembrane region" description="Helical" evidence="1">
    <location>
        <begin position="199"/>
        <end position="219"/>
    </location>
</feature>
<feature type="topological domain" description="Periplasmic" evidence="1">
    <location>
        <begin position="220"/>
        <end position="235"/>
    </location>
</feature>
<feature type="transmembrane region" description="Helical" evidence="1">
    <location>
        <begin position="236"/>
        <end position="256"/>
    </location>
</feature>
<feature type="topological domain" description="Cytoplasmic" evidence="1">
    <location>
        <begin position="257"/>
        <end position="262"/>
    </location>
</feature>
<feature type="transmembrane region" description="Helical" evidence="1">
    <location>
        <begin position="263"/>
        <end position="283"/>
    </location>
</feature>
<feature type="topological domain" description="Periplasmic" evidence="1">
    <location>
        <begin position="284"/>
        <end position="287"/>
    </location>
</feature>
<feature type="transmembrane region" description="Helical" evidence="1">
    <location>
        <begin position="288"/>
        <end position="308"/>
    </location>
</feature>
<feature type="topological domain" description="Cytoplasmic" evidence="1">
    <location>
        <begin position="309"/>
        <end position="337"/>
    </location>
</feature>
<feature type="transmembrane region" description="Helical" evidence="1">
    <location>
        <begin position="338"/>
        <end position="358"/>
    </location>
</feature>
<feature type="topological domain" description="Periplasmic" evidence="1">
    <location>
        <begin position="359"/>
        <end position="360"/>
    </location>
</feature>
<dbReference type="EC" id="2.7.8.13" evidence="1"/>
<dbReference type="EMBL" id="CP000970">
    <property type="protein sequence ID" value="ACB19940.1"/>
    <property type="molecule type" value="Genomic_DNA"/>
</dbReference>
<dbReference type="RefSeq" id="WP_000964122.1">
    <property type="nucleotide sequence ID" value="NC_010498.1"/>
</dbReference>
<dbReference type="SMR" id="B1LG24"/>
<dbReference type="GeneID" id="86862597"/>
<dbReference type="KEGG" id="ecm:EcSMS35_0092"/>
<dbReference type="HOGENOM" id="CLU_023982_0_0_6"/>
<dbReference type="UniPathway" id="UPA00219"/>
<dbReference type="Proteomes" id="UP000007011">
    <property type="component" value="Chromosome"/>
</dbReference>
<dbReference type="GO" id="GO:0005886">
    <property type="term" value="C:plasma membrane"/>
    <property type="evidence" value="ECO:0007669"/>
    <property type="project" value="UniProtKB-SubCell"/>
</dbReference>
<dbReference type="GO" id="GO:0046872">
    <property type="term" value="F:metal ion binding"/>
    <property type="evidence" value="ECO:0007669"/>
    <property type="project" value="UniProtKB-KW"/>
</dbReference>
<dbReference type="GO" id="GO:0008963">
    <property type="term" value="F:phospho-N-acetylmuramoyl-pentapeptide-transferase activity"/>
    <property type="evidence" value="ECO:0007669"/>
    <property type="project" value="UniProtKB-UniRule"/>
</dbReference>
<dbReference type="GO" id="GO:0051992">
    <property type="term" value="F:UDP-N-acetylmuramoyl-L-alanyl-D-glutamyl-meso-2,6-diaminopimelyl-D-alanyl-D-alanine:undecaprenyl-phosphate transferase activity"/>
    <property type="evidence" value="ECO:0007669"/>
    <property type="project" value="RHEA"/>
</dbReference>
<dbReference type="GO" id="GO:0051301">
    <property type="term" value="P:cell division"/>
    <property type="evidence" value="ECO:0007669"/>
    <property type="project" value="UniProtKB-KW"/>
</dbReference>
<dbReference type="GO" id="GO:0071555">
    <property type="term" value="P:cell wall organization"/>
    <property type="evidence" value="ECO:0007669"/>
    <property type="project" value="UniProtKB-KW"/>
</dbReference>
<dbReference type="GO" id="GO:0009252">
    <property type="term" value="P:peptidoglycan biosynthetic process"/>
    <property type="evidence" value="ECO:0007669"/>
    <property type="project" value="UniProtKB-UniRule"/>
</dbReference>
<dbReference type="GO" id="GO:0008360">
    <property type="term" value="P:regulation of cell shape"/>
    <property type="evidence" value="ECO:0007669"/>
    <property type="project" value="UniProtKB-KW"/>
</dbReference>
<dbReference type="CDD" id="cd06852">
    <property type="entry name" value="GT_MraY"/>
    <property type="match status" value="1"/>
</dbReference>
<dbReference type="HAMAP" id="MF_00038">
    <property type="entry name" value="MraY"/>
    <property type="match status" value="1"/>
</dbReference>
<dbReference type="InterPro" id="IPR000715">
    <property type="entry name" value="Glycosyl_transferase_4"/>
</dbReference>
<dbReference type="InterPro" id="IPR003524">
    <property type="entry name" value="PNAcMuramoyl-5peptid_Trfase"/>
</dbReference>
<dbReference type="InterPro" id="IPR018480">
    <property type="entry name" value="PNAcMuramoyl-5peptid_Trfase_CS"/>
</dbReference>
<dbReference type="NCBIfam" id="TIGR00445">
    <property type="entry name" value="mraY"/>
    <property type="match status" value="1"/>
</dbReference>
<dbReference type="PANTHER" id="PTHR22926">
    <property type="entry name" value="PHOSPHO-N-ACETYLMURAMOYL-PENTAPEPTIDE-TRANSFERASE"/>
    <property type="match status" value="1"/>
</dbReference>
<dbReference type="PANTHER" id="PTHR22926:SF5">
    <property type="entry name" value="PHOSPHO-N-ACETYLMURAMOYL-PENTAPEPTIDE-TRANSFERASE HOMOLOG"/>
    <property type="match status" value="1"/>
</dbReference>
<dbReference type="Pfam" id="PF00953">
    <property type="entry name" value="Glycos_transf_4"/>
    <property type="match status" value="1"/>
</dbReference>
<dbReference type="Pfam" id="PF10555">
    <property type="entry name" value="MraY_sig1"/>
    <property type="match status" value="1"/>
</dbReference>
<dbReference type="PROSITE" id="PS01347">
    <property type="entry name" value="MRAY_1"/>
    <property type="match status" value="1"/>
</dbReference>
<dbReference type="PROSITE" id="PS01348">
    <property type="entry name" value="MRAY_2"/>
    <property type="match status" value="1"/>
</dbReference>
<accession>B1LG24</accession>
<keyword id="KW-0131">Cell cycle</keyword>
<keyword id="KW-0132">Cell division</keyword>
<keyword id="KW-0997">Cell inner membrane</keyword>
<keyword id="KW-1003">Cell membrane</keyword>
<keyword id="KW-0133">Cell shape</keyword>
<keyword id="KW-0961">Cell wall biogenesis/degradation</keyword>
<keyword id="KW-0460">Magnesium</keyword>
<keyword id="KW-0472">Membrane</keyword>
<keyword id="KW-0479">Metal-binding</keyword>
<keyword id="KW-0573">Peptidoglycan synthesis</keyword>
<keyword id="KW-0808">Transferase</keyword>
<keyword id="KW-0812">Transmembrane</keyword>
<keyword id="KW-1133">Transmembrane helix</keyword>
<protein>
    <recommendedName>
        <fullName evidence="1">Phospho-N-acetylmuramoyl-pentapeptide-transferase</fullName>
        <ecNumber evidence="1">2.7.8.13</ecNumber>
    </recommendedName>
    <alternativeName>
        <fullName evidence="1">UDP-MurNAc-pentapeptide phosphotransferase</fullName>
    </alternativeName>
</protein>
<evidence type="ECO:0000255" key="1">
    <source>
        <dbReference type="HAMAP-Rule" id="MF_00038"/>
    </source>
</evidence>